<accession>P17521</accession>
<feature type="chain" id="PRO_0000222411" description="Major capsid protein">
    <location>
        <begin position="1"/>
        <end position="208"/>
    </location>
</feature>
<feature type="region of interest" description="Disordered" evidence="3">
    <location>
        <begin position="1"/>
        <end position="69"/>
    </location>
</feature>
<feature type="compositionally biased region" description="Low complexity" evidence="3">
    <location>
        <begin position="1"/>
        <end position="16"/>
    </location>
</feature>
<feature type="compositionally biased region" description="Basic residues" evidence="3">
    <location>
        <begin position="17"/>
        <end position="30"/>
    </location>
</feature>
<feature type="compositionally biased region" description="Basic residues" evidence="3">
    <location>
        <begin position="44"/>
        <end position="61"/>
    </location>
</feature>
<dbReference type="EMBL" id="D13753">
    <property type="protein sequence ID" value="BAA02900.1"/>
    <property type="molecule type" value="Genomic_RNA"/>
</dbReference>
<dbReference type="PIR" id="JQ0001">
    <property type="entry name" value="VCVQL2"/>
</dbReference>
<dbReference type="SMR" id="P17521"/>
<dbReference type="GO" id="GO:0039617">
    <property type="term" value="C:T=3 icosahedral viral capsid"/>
    <property type="evidence" value="ECO:0007669"/>
    <property type="project" value="UniProtKB-KW"/>
</dbReference>
<dbReference type="GO" id="GO:0005198">
    <property type="term" value="F:structural molecule activity"/>
    <property type="evidence" value="ECO:0007669"/>
    <property type="project" value="InterPro"/>
</dbReference>
<dbReference type="Gene3D" id="2.60.120.20">
    <property type="match status" value="1"/>
</dbReference>
<dbReference type="InterPro" id="IPR001517">
    <property type="entry name" value="Luteo_coat"/>
</dbReference>
<dbReference type="InterPro" id="IPR029053">
    <property type="entry name" value="Viral_coat"/>
</dbReference>
<dbReference type="Pfam" id="PF00894">
    <property type="entry name" value="Luteo_coat"/>
    <property type="match status" value="1"/>
</dbReference>
<dbReference type="PRINTS" id="PR00915">
    <property type="entry name" value="LUTEOGP1COAT"/>
</dbReference>
<organismHost>
    <name type="scientific">Solanum tuberosum</name>
    <name type="common">Potato</name>
    <dbReference type="NCBI Taxonomy" id="4113"/>
</organismHost>
<name>CAPSD_PLRVR</name>
<evidence type="ECO:0000250" key="1">
    <source>
        <dbReference type="UniProtKB" id="P17522"/>
    </source>
</evidence>
<evidence type="ECO:0000250" key="2">
    <source>
        <dbReference type="UniProtKB" id="P17525"/>
    </source>
</evidence>
<evidence type="ECO:0000256" key="3">
    <source>
        <dbReference type="SAM" id="MobiDB-lite"/>
    </source>
</evidence>
<evidence type="ECO:0000305" key="4"/>
<reference key="1">
    <citation type="journal article" date="1989" name="J. Gen. Virol.">
        <title>Identification and characterization of the potato leafroll virus putative coat protein gene.</title>
        <authorList>
            <person name="Kawchuk L.M."/>
            <person name="Martin R.R."/>
            <person name="Rochon D.M."/>
            <person name="McPherson J."/>
        </authorList>
    </citation>
    <scope>NUCLEOTIDE SEQUENCE [GENOMIC RNA]</scope>
</reference>
<organism>
    <name type="scientific">Potato leafroll virus (strain Potato/Canada/Rowhani/1979)</name>
    <name type="common">PLrV</name>
    <dbReference type="NCBI Taxonomy" id="12047"/>
    <lineage>
        <taxon>Viruses</taxon>
        <taxon>Riboviria</taxon>
        <taxon>Orthornavirae</taxon>
        <taxon>Pisuviricota</taxon>
        <taxon>Pisoniviricetes</taxon>
        <taxon>Sobelivirales</taxon>
        <taxon>Solemoviridae</taxon>
        <taxon>Polerovirus</taxon>
        <taxon>Potato leafroll virus</taxon>
    </lineage>
</organism>
<protein>
    <recommendedName>
        <fullName>Major capsid protein</fullName>
    </recommendedName>
    <alternativeName>
        <fullName>Coat protein</fullName>
        <shortName>CP</shortName>
    </alternativeName>
    <alternativeName>
        <fullName evidence="1">P3</fullName>
    </alternativeName>
</protein>
<keyword id="KW-0167">Capsid protein</keyword>
<keyword id="KW-1142">T=3 icosahedral capsid protein</keyword>
<keyword id="KW-0946">Virion</keyword>
<sequence>MSTVVVKGNVNGGVQQPRRRRRQSLRRRANRVQPVVMVTAPGQPRRRRRRRGGNRRSRRTGVPRGRGSSETFVFTKDNLVGNSQGSFTFGPSLSDCPAFKDGILKAYHEYKITSILLQFVSEASSTSSGSIAYELDPHCKVSSLQSYVNKFQITKGGAKTYQARMINGVEWHDSSEDQCRILWKGNGKSSDPAGSFRVTIRVALQNPK</sequence>
<gene>
    <name type="ORF">ORF3</name>
</gene>
<comment type="function">
    <text evidence="1">Major capsid protein that self-assembles to form an icosahedral capsid with a T=3 symmetry, about 23 nm in diameter, and consisting of 180 capsid proteins monomers. Most of the 180 monomers are the major capsid protein, but a small percentage contain the minor capsid protein, which has a long C-terminal extension.</text>
</comment>
<comment type="subcellular location">
    <subcellularLocation>
        <location evidence="1">Virion</location>
    </subcellularLocation>
</comment>
<comment type="domain">
    <text evidence="2">The N-terminus like those of many plant virus capsid proteins is highly basic. These regions may be involved in protein-RNA interaction.</text>
</comment>
<comment type="similarity">
    <text evidence="4">Belongs to the luteoviruses capsid protein family.</text>
</comment>
<proteinExistence type="inferred from homology"/>